<proteinExistence type="evidence at transcript level"/>
<keyword id="KW-0025">Alternative splicing</keyword>
<keyword id="KW-0272">Extracellular matrix</keyword>
<keyword id="KW-0325">Glycoprotein</keyword>
<keyword id="KW-0433">Leucine-rich repeat</keyword>
<keyword id="KW-1185">Reference proteome</keyword>
<keyword id="KW-0677">Repeat</keyword>
<keyword id="KW-0964">Secreted</keyword>
<keyword id="KW-0732">Signal</keyword>
<gene>
    <name type="primary">Podn</name>
</gene>
<name>PODN_MOUSE</name>
<organism>
    <name type="scientific">Mus musculus</name>
    <name type="common">Mouse</name>
    <dbReference type="NCBI Taxonomy" id="10090"/>
    <lineage>
        <taxon>Eukaryota</taxon>
        <taxon>Metazoa</taxon>
        <taxon>Chordata</taxon>
        <taxon>Craniata</taxon>
        <taxon>Vertebrata</taxon>
        <taxon>Euteleostomi</taxon>
        <taxon>Mammalia</taxon>
        <taxon>Eutheria</taxon>
        <taxon>Euarchontoglires</taxon>
        <taxon>Glires</taxon>
        <taxon>Rodentia</taxon>
        <taxon>Myomorpha</taxon>
        <taxon>Muroidea</taxon>
        <taxon>Muridae</taxon>
        <taxon>Murinae</taxon>
        <taxon>Mus</taxon>
        <taxon>Mus</taxon>
    </lineage>
</organism>
<sequence length="611" mass="68718">MAGSRGLPLLLLVLQLFLGPVLPVRAPVFGRSDTPTLSPEENEFVEEENQPVLVLSSEEPEPGPATVDCPRDCACSQEGVVDCGGIDLREFPGDLPEHTNHLSLQNNQLEKIYPEELSRLQRLETLNLQNNRLTSRGLPEEAFEHLTSLNYLYLANNKLTLAPRFLPNALISVDFAANYLTKIYGLTFGQKPNLRSVYLHNNKLADAGLPDHMFNGSSNVEILILSSNFLRHVPKHLPPALYKLHLKNNKLEKIPPGAFSELSNLRELYLQNNYLTDEGLDNETFWKLSSLEYLDLSSNNLSRVPAGLPRSLVLLHLEKNAIQSVEADVLTPIRNLEYLLLHSNQLQAKGIHPLAFQGLKKLHTVHLYNNALERVPSGLPRRVRTLMILHNQITGIGREDFATTYFLEELNLSYNRITSPQMHRDAFRKLRLLRSLDLSGNRLQTLPPGLPKNVHVLKVKRNELAALARGALAGMAQLRELYLTGNRLRSRALGPRAWVDLAGLQLLDIAGNQLTEVPEGLPPSLEYLYLQNNKISAVPANAFDSTPNLKGIFLRFNKLAVGSVVESAFRRLKHLQVLDIEGNFEFGNGSKDKDEEEEEEEEEEDEEEETR</sequence>
<evidence type="ECO:0000250" key="1"/>
<evidence type="ECO:0000255" key="2"/>
<evidence type="ECO:0000256" key="3">
    <source>
        <dbReference type="SAM" id="MobiDB-lite"/>
    </source>
</evidence>
<evidence type="ECO:0000269" key="4">
    <source>
    </source>
</evidence>
<evidence type="ECO:0000303" key="5">
    <source>
    </source>
</evidence>
<evidence type="ECO:0000305" key="6"/>
<dbReference type="EMBL" id="AY313606">
    <property type="protein sequence ID" value="AAP79897.1"/>
    <property type="molecule type" value="mRNA"/>
</dbReference>
<dbReference type="EMBL" id="AK034987">
    <property type="protein sequence ID" value="BAC28904.1"/>
    <property type="molecule type" value="mRNA"/>
</dbReference>
<dbReference type="EMBL" id="AL611936">
    <property type="status" value="NOT_ANNOTATED_CDS"/>
    <property type="molecule type" value="Genomic_DNA"/>
</dbReference>
<dbReference type="EMBL" id="CH466527">
    <property type="protein sequence ID" value="EDL30756.1"/>
    <property type="molecule type" value="Genomic_DNA"/>
</dbReference>
<dbReference type="EMBL" id="CH466527">
    <property type="protein sequence ID" value="EDL30757.1"/>
    <property type="molecule type" value="Genomic_DNA"/>
</dbReference>
<dbReference type="EMBL" id="BC094340">
    <property type="protein sequence ID" value="AAH94340.1"/>
    <property type="molecule type" value="mRNA"/>
</dbReference>
<dbReference type="CCDS" id="CCDS18445.1">
    <molecule id="Q7TQ62-1"/>
</dbReference>
<dbReference type="RefSeq" id="NP_001272885.1">
    <molecule id="Q7TQ62-1"/>
    <property type="nucleotide sequence ID" value="NM_001285956.2"/>
</dbReference>
<dbReference type="RefSeq" id="NP_001272887.1">
    <molecule id="Q7TQ62-1"/>
    <property type="nucleotide sequence ID" value="NM_001285958.2"/>
</dbReference>
<dbReference type="RefSeq" id="NP_001412052.1">
    <molecule id="Q7TQ62-1"/>
    <property type="nucleotide sequence ID" value="NM_001425123.1"/>
</dbReference>
<dbReference type="RefSeq" id="NP_001412053.1">
    <molecule id="Q7TQ62-1"/>
    <property type="nucleotide sequence ID" value="NM_001425124.1"/>
</dbReference>
<dbReference type="RefSeq" id="NP_766462.2">
    <molecule id="Q7TQ62-1"/>
    <property type="nucleotide sequence ID" value="NM_172874.3"/>
</dbReference>
<dbReference type="RefSeq" id="XP_006503155.1">
    <property type="nucleotide sequence ID" value="XM_006503092.3"/>
</dbReference>
<dbReference type="RefSeq" id="XP_011238834.1">
    <molecule id="Q7TQ62-2"/>
    <property type="nucleotide sequence ID" value="XM_011240532.1"/>
</dbReference>
<dbReference type="RefSeq" id="XP_011238835.1">
    <property type="nucleotide sequence ID" value="XM_011240533.1"/>
</dbReference>
<dbReference type="RefSeq" id="XP_011238836.1">
    <property type="nucleotide sequence ID" value="XM_011240534.1"/>
</dbReference>
<dbReference type="RefSeq" id="XP_030109428.1">
    <molecule id="Q7TQ62-2"/>
    <property type="nucleotide sequence ID" value="XM_030253568.1"/>
</dbReference>
<dbReference type="SMR" id="Q7TQ62"/>
<dbReference type="FunCoup" id="Q7TQ62">
    <property type="interactions" value="71"/>
</dbReference>
<dbReference type="IntAct" id="Q7TQ62">
    <property type="interactions" value="1"/>
</dbReference>
<dbReference type="STRING" id="10090.ENSMUSP00000102320"/>
<dbReference type="GlyCosmos" id="Q7TQ62">
    <property type="glycosylation" value="3 sites, No reported glycans"/>
</dbReference>
<dbReference type="GlyGen" id="Q7TQ62">
    <property type="glycosylation" value="4 sites, 1 N-linked glycan (1 site)"/>
</dbReference>
<dbReference type="PhosphoSitePlus" id="Q7TQ62"/>
<dbReference type="CPTAC" id="non-CPTAC-3608"/>
<dbReference type="jPOST" id="Q7TQ62"/>
<dbReference type="PaxDb" id="10090-ENSMUSP00000102320"/>
<dbReference type="ProteomicsDB" id="289358">
    <molecule id="Q7TQ62-1"/>
</dbReference>
<dbReference type="ProteomicsDB" id="289359">
    <molecule id="Q7TQ62-2"/>
</dbReference>
<dbReference type="Antibodypedia" id="2151">
    <property type="antibodies" value="116 antibodies from 29 providers"/>
</dbReference>
<dbReference type="DNASU" id="242608"/>
<dbReference type="Ensembl" id="ENSMUST00000106708.8">
    <molecule id="Q7TQ62-1"/>
    <property type="protein sequence ID" value="ENSMUSP00000102319.2"/>
    <property type="gene ID" value="ENSMUSG00000028600.17"/>
</dbReference>
<dbReference type="Ensembl" id="ENSMUST00000106709.9">
    <molecule id="Q7TQ62-1"/>
    <property type="protein sequence ID" value="ENSMUSP00000102320.3"/>
    <property type="gene ID" value="ENSMUSG00000028600.17"/>
</dbReference>
<dbReference type="GeneID" id="242608"/>
<dbReference type="KEGG" id="mmu:242608"/>
<dbReference type="UCSC" id="uc008uaq.1">
    <molecule id="Q7TQ62-1"/>
    <property type="organism name" value="mouse"/>
</dbReference>
<dbReference type="AGR" id="MGI:2674939"/>
<dbReference type="CTD" id="127435"/>
<dbReference type="MGI" id="MGI:2674939">
    <property type="gene designation" value="Podn"/>
</dbReference>
<dbReference type="VEuPathDB" id="HostDB:ENSMUSG00000028600"/>
<dbReference type="eggNOG" id="KOG0619">
    <property type="taxonomic scope" value="Eukaryota"/>
</dbReference>
<dbReference type="GeneTree" id="ENSGT00940000160740"/>
<dbReference type="HOGENOM" id="CLU_000288_186_3_1"/>
<dbReference type="InParanoid" id="Q7TQ62"/>
<dbReference type="OMA" id="CAADSDF"/>
<dbReference type="OrthoDB" id="10027416at2759"/>
<dbReference type="PhylomeDB" id="Q7TQ62"/>
<dbReference type="TreeFam" id="TF336377"/>
<dbReference type="BioGRID-ORCS" id="242608">
    <property type="hits" value="0 hits in 77 CRISPR screens"/>
</dbReference>
<dbReference type="ChiTaRS" id="Podn">
    <property type="organism name" value="mouse"/>
</dbReference>
<dbReference type="PRO" id="PR:Q7TQ62"/>
<dbReference type="Proteomes" id="UP000000589">
    <property type="component" value="Chromosome 4"/>
</dbReference>
<dbReference type="RNAct" id="Q7TQ62">
    <property type="molecule type" value="protein"/>
</dbReference>
<dbReference type="Bgee" id="ENSMUSG00000028600">
    <property type="expression patterns" value="Expressed in digit and 173 other cell types or tissues"/>
</dbReference>
<dbReference type="ExpressionAtlas" id="Q7TQ62">
    <property type="expression patterns" value="baseline and differential"/>
</dbReference>
<dbReference type="GO" id="GO:0005737">
    <property type="term" value="C:cytoplasm"/>
    <property type="evidence" value="ECO:0007669"/>
    <property type="project" value="Ensembl"/>
</dbReference>
<dbReference type="GO" id="GO:0005615">
    <property type="term" value="C:extracellular space"/>
    <property type="evidence" value="ECO:0007669"/>
    <property type="project" value="Ensembl"/>
</dbReference>
<dbReference type="GO" id="GO:0005518">
    <property type="term" value="F:collagen binding"/>
    <property type="evidence" value="ECO:0007669"/>
    <property type="project" value="Ensembl"/>
</dbReference>
<dbReference type="GO" id="GO:0030336">
    <property type="term" value="P:negative regulation of cell migration"/>
    <property type="evidence" value="ECO:0000250"/>
    <property type="project" value="UniProtKB"/>
</dbReference>
<dbReference type="GO" id="GO:0008285">
    <property type="term" value="P:negative regulation of cell population proliferation"/>
    <property type="evidence" value="ECO:0007669"/>
    <property type="project" value="Ensembl"/>
</dbReference>
<dbReference type="FunFam" id="3.80.10.10:FF:000212">
    <property type="entry name" value="Podocan"/>
    <property type="match status" value="1"/>
</dbReference>
<dbReference type="FunFam" id="3.80.10.10:FF:000146">
    <property type="entry name" value="podocan isoform X2"/>
    <property type="match status" value="1"/>
</dbReference>
<dbReference type="Gene3D" id="3.80.10.10">
    <property type="entry name" value="Ribonuclease Inhibitor"/>
    <property type="match status" value="5"/>
</dbReference>
<dbReference type="InterPro" id="IPR001611">
    <property type="entry name" value="Leu-rich_rpt"/>
</dbReference>
<dbReference type="InterPro" id="IPR003591">
    <property type="entry name" value="Leu-rich_rpt_typical-subtyp"/>
</dbReference>
<dbReference type="InterPro" id="IPR032675">
    <property type="entry name" value="LRR_dom_sf"/>
</dbReference>
<dbReference type="InterPro" id="IPR000372">
    <property type="entry name" value="LRRNT"/>
</dbReference>
<dbReference type="InterPro" id="IPR050333">
    <property type="entry name" value="SLRP"/>
</dbReference>
<dbReference type="PANTHER" id="PTHR45712">
    <property type="entry name" value="AGAP008170-PA"/>
    <property type="match status" value="1"/>
</dbReference>
<dbReference type="PANTHER" id="PTHR45712:SF20">
    <property type="entry name" value="PODOCAN"/>
    <property type="match status" value="1"/>
</dbReference>
<dbReference type="Pfam" id="PF13855">
    <property type="entry name" value="LRR_8"/>
    <property type="match status" value="5"/>
</dbReference>
<dbReference type="PRINTS" id="PR00019">
    <property type="entry name" value="LEURICHRPT"/>
</dbReference>
<dbReference type="SMART" id="SM00364">
    <property type="entry name" value="LRR_BAC"/>
    <property type="match status" value="8"/>
</dbReference>
<dbReference type="SMART" id="SM00369">
    <property type="entry name" value="LRR_TYP"/>
    <property type="match status" value="13"/>
</dbReference>
<dbReference type="SMART" id="SM00013">
    <property type="entry name" value="LRRNT"/>
    <property type="match status" value="1"/>
</dbReference>
<dbReference type="SUPFAM" id="SSF52058">
    <property type="entry name" value="L domain-like"/>
    <property type="match status" value="2"/>
</dbReference>
<dbReference type="PROSITE" id="PS51450">
    <property type="entry name" value="LRR"/>
    <property type="match status" value="17"/>
</dbReference>
<feature type="signal peptide" evidence="2">
    <location>
        <begin position="1"/>
        <end position="23"/>
    </location>
</feature>
<feature type="chain" id="PRO_0000262525" description="Podocan">
    <location>
        <begin position="24"/>
        <end position="611"/>
    </location>
</feature>
<feature type="domain" description="LRRNT">
    <location>
        <begin position="60"/>
        <end position="97"/>
    </location>
</feature>
<feature type="repeat" description="LRR 1">
    <location>
        <begin position="98"/>
        <end position="119"/>
    </location>
</feature>
<feature type="repeat" description="LRR 2">
    <location>
        <begin position="122"/>
        <end position="145"/>
    </location>
</feature>
<feature type="repeat" description="LRR 3">
    <location>
        <begin position="148"/>
        <end position="169"/>
    </location>
</feature>
<feature type="repeat" description="LRR 4">
    <location>
        <begin position="170"/>
        <end position="190"/>
    </location>
</feature>
<feature type="repeat" description="LRR 5">
    <location>
        <begin position="193"/>
        <end position="213"/>
    </location>
</feature>
<feature type="repeat" description="LRR 6">
    <location>
        <begin position="219"/>
        <end position="239"/>
    </location>
</feature>
<feature type="repeat" description="LRR 7">
    <location>
        <begin position="240"/>
        <end position="261"/>
    </location>
</feature>
<feature type="repeat" description="LRR 8">
    <location>
        <begin position="264"/>
        <end position="284"/>
    </location>
</feature>
<feature type="repeat" description="LRR 9">
    <location>
        <begin position="290"/>
        <end position="311"/>
    </location>
</feature>
<feature type="repeat" description="LRR 10">
    <location>
        <begin position="312"/>
        <end position="332"/>
    </location>
</feature>
<feature type="repeat" description="LRR 11">
    <location>
        <begin position="335"/>
        <end position="358"/>
    </location>
</feature>
<feature type="repeat" description="LRR 12">
    <location>
        <begin position="361"/>
        <end position="382"/>
    </location>
</feature>
<feature type="repeat" description="LRR 13">
    <location>
        <begin position="383"/>
        <end position="403"/>
    </location>
</feature>
<feature type="repeat" description="LRR 14">
    <location>
        <begin position="406"/>
        <end position="427"/>
    </location>
</feature>
<feature type="repeat" description="LRR 15">
    <location>
        <begin position="432"/>
        <end position="453"/>
    </location>
</feature>
<feature type="repeat" description="LRR 16">
    <location>
        <begin position="477"/>
        <end position="490"/>
    </location>
</feature>
<feature type="repeat" description="LRR 17">
    <location>
        <begin position="503"/>
        <end position="523"/>
    </location>
</feature>
<feature type="repeat" description="LRR 18">
    <location>
        <begin position="524"/>
        <end position="545"/>
    </location>
</feature>
<feature type="repeat" description="LRR 19">
    <location>
        <begin position="548"/>
        <end position="569"/>
    </location>
</feature>
<feature type="repeat" description="LRR 20">
    <location>
        <begin position="574"/>
        <end position="583"/>
    </location>
</feature>
<feature type="region of interest" description="Disordered" evidence="3">
    <location>
        <begin position="585"/>
        <end position="611"/>
    </location>
</feature>
<feature type="compositionally biased region" description="Acidic residues" evidence="3">
    <location>
        <begin position="594"/>
        <end position="611"/>
    </location>
</feature>
<feature type="glycosylation site" description="N-linked (GlcNAc...) asparagine" evidence="2">
    <location>
        <position position="215"/>
    </location>
</feature>
<feature type="glycosylation site" description="N-linked (GlcNAc...) asparagine" evidence="2">
    <location>
        <position position="282"/>
    </location>
</feature>
<feature type="glycosylation site" description="N-linked (GlcNAc...) asparagine" evidence="2">
    <location>
        <position position="411"/>
    </location>
</feature>
<feature type="splice variant" id="VSP_021785" description="In isoform 2." evidence="5">
    <location>
        <begin position="1"/>
        <end position="212"/>
    </location>
</feature>
<comment type="function">
    <text evidence="1">Negatively regulates cell proliferation and cell migration, especially in smooth muscle cells.</text>
</comment>
<comment type="subunit">
    <text evidence="1">Binds to type I collagen.</text>
</comment>
<comment type="subcellular location">
    <subcellularLocation>
        <location evidence="4">Secreted</location>
        <location evidence="4">Extracellular space</location>
        <location evidence="4">Extracellular matrix</location>
    </subcellularLocation>
</comment>
<comment type="alternative products">
    <event type="alternative splicing"/>
    <isoform>
        <id>Q7TQ62-1</id>
        <name>1</name>
        <sequence type="displayed"/>
    </isoform>
    <isoform>
        <id>Q7TQ62-2</id>
        <name>2</name>
        <sequence type="described" ref="VSP_021785"/>
    </isoform>
</comment>
<comment type="tissue specificity">
    <text evidence="4">Kidney. Expressed in podocytes and likely vascular endothelial cells within the glomerulus.</text>
</comment>
<comment type="developmental stage">
    <text evidence="4">Detected at low levels in normal embryonic kidney from embryonic day 14 through birth. Expression increases dramatically within 24 hours following birth and maximal levels coincide with the completion of morphogenesis at 2 weeks of age.</text>
</comment>
<comment type="PTM">
    <text evidence="1">N-glycosylated.</text>
</comment>
<comment type="similarity">
    <text evidence="6">Belongs to the small leucine-rich proteoglycan (SLRP) family. SLRP class V subfamily.</text>
</comment>
<protein>
    <recommendedName>
        <fullName>Podocan</fullName>
    </recommendedName>
</protein>
<accession>Q7TQ62</accession>
<accession>A2A8F3</accession>
<accession>Q8BM45</accession>
<reference key="1">
    <citation type="journal article" date="2003" name="J. Biol. Chem.">
        <title>Podocan, a novel small leucine-rich repeat protein expressed in the sclerotic glomerular lesion of experimental HIV-associated nephropathy.</title>
        <authorList>
            <person name="Ross M.D."/>
            <person name="Bruggeman L.A."/>
            <person name="Hanss B."/>
            <person name="Sunamoto M."/>
            <person name="Marras D."/>
            <person name="Klotman M.E."/>
            <person name="Klotman P.E."/>
        </authorList>
    </citation>
    <scope>NUCLEOTIDE SEQUENCE [MRNA] (ISOFORM 1)</scope>
    <scope>DEVELOPMENTAL STAGE</scope>
    <scope>TISSUE SPECIFICITY</scope>
    <scope>SUBCELLULAR LOCATION</scope>
    <source>
        <strain>FVB/N</strain>
    </source>
</reference>
<reference key="2">
    <citation type="journal article" date="2005" name="Science">
        <title>The transcriptional landscape of the mammalian genome.</title>
        <authorList>
            <person name="Carninci P."/>
            <person name="Kasukawa T."/>
            <person name="Katayama S."/>
            <person name="Gough J."/>
            <person name="Frith M.C."/>
            <person name="Maeda N."/>
            <person name="Oyama R."/>
            <person name="Ravasi T."/>
            <person name="Lenhard B."/>
            <person name="Wells C."/>
            <person name="Kodzius R."/>
            <person name="Shimokawa K."/>
            <person name="Bajic V.B."/>
            <person name="Brenner S.E."/>
            <person name="Batalov S."/>
            <person name="Forrest A.R."/>
            <person name="Zavolan M."/>
            <person name="Davis M.J."/>
            <person name="Wilming L.G."/>
            <person name="Aidinis V."/>
            <person name="Allen J.E."/>
            <person name="Ambesi-Impiombato A."/>
            <person name="Apweiler R."/>
            <person name="Aturaliya R.N."/>
            <person name="Bailey T.L."/>
            <person name="Bansal M."/>
            <person name="Baxter L."/>
            <person name="Beisel K.W."/>
            <person name="Bersano T."/>
            <person name="Bono H."/>
            <person name="Chalk A.M."/>
            <person name="Chiu K.P."/>
            <person name="Choudhary V."/>
            <person name="Christoffels A."/>
            <person name="Clutterbuck D.R."/>
            <person name="Crowe M.L."/>
            <person name="Dalla E."/>
            <person name="Dalrymple B.P."/>
            <person name="de Bono B."/>
            <person name="Della Gatta G."/>
            <person name="di Bernardo D."/>
            <person name="Down T."/>
            <person name="Engstrom P."/>
            <person name="Fagiolini M."/>
            <person name="Faulkner G."/>
            <person name="Fletcher C.F."/>
            <person name="Fukushima T."/>
            <person name="Furuno M."/>
            <person name="Futaki S."/>
            <person name="Gariboldi M."/>
            <person name="Georgii-Hemming P."/>
            <person name="Gingeras T.R."/>
            <person name="Gojobori T."/>
            <person name="Green R.E."/>
            <person name="Gustincich S."/>
            <person name="Harbers M."/>
            <person name="Hayashi Y."/>
            <person name="Hensch T.K."/>
            <person name="Hirokawa N."/>
            <person name="Hill D."/>
            <person name="Huminiecki L."/>
            <person name="Iacono M."/>
            <person name="Ikeo K."/>
            <person name="Iwama A."/>
            <person name="Ishikawa T."/>
            <person name="Jakt M."/>
            <person name="Kanapin A."/>
            <person name="Katoh M."/>
            <person name="Kawasawa Y."/>
            <person name="Kelso J."/>
            <person name="Kitamura H."/>
            <person name="Kitano H."/>
            <person name="Kollias G."/>
            <person name="Krishnan S.P."/>
            <person name="Kruger A."/>
            <person name="Kummerfeld S.K."/>
            <person name="Kurochkin I.V."/>
            <person name="Lareau L.F."/>
            <person name="Lazarevic D."/>
            <person name="Lipovich L."/>
            <person name="Liu J."/>
            <person name="Liuni S."/>
            <person name="McWilliam S."/>
            <person name="Madan Babu M."/>
            <person name="Madera M."/>
            <person name="Marchionni L."/>
            <person name="Matsuda H."/>
            <person name="Matsuzawa S."/>
            <person name="Miki H."/>
            <person name="Mignone F."/>
            <person name="Miyake S."/>
            <person name="Morris K."/>
            <person name="Mottagui-Tabar S."/>
            <person name="Mulder N."/>
            <person name="Nakano N."/>
            <person name="Nakauchi H."/>
            <person name="Ng P."/>
            <person name="Nilsson R."/>
            <person name="Nishiguchi S."/>
            <person name="Nishikawa S."/>
            <person name="Nori F."/>
            <person name="Ohara O."/>
            <person name="Okazaki Y."/>
            <person name="Orlando V."/>
            <person name="Pang K.C."/>
            <person name="Pavan W.J."/>
            <person name="Pavesi G."/>
            <person name="Pesole G."/>
            <person name="Petrovsky N."/>
            <person name="Piazza S."/>
            <person name="Reed J."/>
            <person name="Reid J.F."/>
            <person name="Ring B.Z."/>
            <person name="Ringwald M."/>
            <person name="Rost B."/>
            <person name="Ruan Y."/>
            <person name="Salzberg S.L."/>
            <person name="Sandelin A."/>
            <person name="Schneider C."/>
            <person name="Schoenbach C."/>
            <person name="Sekiguchi K."/>
            <person name="Semple C.A."/>
            <person name="Seno S."/>
            <person name="Sessa L."/>
            <person name="Sheng Y."/>
            <person name="Shibata Y."/>
            <person name="Shimada H."/>
            <person name="Shimada K."/>
            <person name="Silva D."/>
            <person name="Sinclair B."/>
            <person name="Sperling S."/>
            <person name="Stupka E."/>
            <person name="Sugiura K."/>
            <person name="Sultana R."/>
            <person name="Takenaka Y."/>
            <person name="Taki K."/>
            <person name="Tammoja K."/>
            <person name="Tan S.L."/>
            <person name="Tang S."/>
            <person name="Taylor M.S."/>
            <person name="Tegner J."/>
            <person name="Teichmann S.A."/>
            <person name="Ueda H.R."/>
            <person name="van Nimwegen E."/>
            <person name="Verardo R."/>
            <person name="Wei C.L."/>
            <person name="Yagi K."/>
            <person name="Yamanishi H."/>
            <person name="Zabarovsky E."/>
            <person name="Zhu S."/>
            <person name="Zimmer A."/>
            <person name="Hide W."/>
            <person name="Bult C."/>
            <person name="Grimmond S.M."/>
            <person name="Teasdale R.D."/>
            <person name="Liu E.T."/>
            <person name="Brusic V."/>
            <person name="Quackenbush J."/>
            <person name="Wahlestedt C."/>
            <person name="Mattick J.S."/>
            <person name="Hume D.A."/>
            <person name="Kai C."/>
            <person name="Sasaki D."/>
            <person name="Tomaru Y."/>
            <person name="Fukuda S."/>
            <person name="Kanamori-Katayama M."/>
            <person name="Suzuki M."/>
            <person name="Aoki J."/>
            <person name="Arakawa T."/>
            <person name="Iida J."/>
            <person name="Imamura K."/>
            <person name="Itoh M."/>
            <person name="Kato T."/>
            <person name="Kawaji H."/>
            <person name="Kawagashira N."/>
            <person name="Kawashima T."/>
            <person name="Kojima M."/>
            <person name="Kondo S."/>
            <person name="Konno H."/>
            <person name="Nakano K."/>
            <person name="Ninomiya N."/>
            <person name="Nishio T."/>
            <person name="Okada M."/>
            <person name="Plessy C."/>
            <person name="Shibata K."/>
            <person name="Shiraki T."/>
            <person name="Suzuki S."/>
            <person name="Tagami M."/>
            <person name="Waki K."/>
            <person name="Watahiki A."/>
            <person name="Okamura-Oho Y."/>
            <person name="Suzuki H."/>
            <person name="Kawai J."/>
            <person name="Hayashizaki Y."/>
        </authorList>
    </citation>
    <scope>NUCLEOTIDE SEQUENCE [LARGE SCALE MRNA] (ISOFORM 2)</scope>
    <source>
        <strain>C57BL/6J</strain>
    </source>
</reference>
<reference key="3">
    <citation type="journal article" date="2009" name="PLoS Biol.">
        <title>Lineage-specific biology revealed by a finished genome assembly of the mouse.</title>
        <authorList>
            <person name="Church D.M."/>
            <person name="Goodstadt L."/>
            <person name="Hillier L.W."/>
            <person name="Zody M.C."/>
            <person name="Goldstein S."/>
            <person name="She X."/>
            <person name="Bult C.J."/>
            <person name="Agarwala R."/>
            <person name="Cherry J.L."/>
            <person name="DiCuccio M."/>
            <person name="Hlavina W."/>
            <person name="Kapustin Y."/>
            <person name="Meric P."/>
            <person name="Maglott D."/>
            <person name="Birtle Z."/>
            <person name="Marques A.C."/>
            <person name="Graves T."/>
            <person name="Zhou S."/>
            <person name="Teague B."/>
            <person name="Potamousis K."/>
            <person name="Churas C."/>
            <person name="Place M."/>
            <person name="Herschleb J."/>
            <person name="Runnheim R."/>
            <person name="Forrest D."/>
            <person name="Amos-Landgraf J."/>
            <person name="Schwartz D.C."/>
            <person name="Cheng Z."/>
            <person name="Lindblad-Toh K."/>
            <person name="Eichler E.E."/>
            <person name="Ponting C.P."/>
        </authorList>
    </citation>
    <scope>NUCLEOTIDE SEQUENCE [LARGE SCALE GENOMIC DNA]</scope>
    <source>
        <strain>C57BL/6J</strain>
    </source>
</reference>
<reference key="4">
    <citation type="submission" date="2005-09" db="EMBL/GenBank/DDBJ databases">
        <authorList>
            <person name="Mural R.J."/>
            <person name="Adams M.D."/>
            <person name="Myers E.W."/>
            <person name="Smith H.O."/>
            <person name="Venter J.C."/>
        </authorList>
    </citation>
    <scope>NUCLEOTIDE SEQUENCE [LARGE SCALE GENOMIC DNA]</scope>
</reference>
<reference key="5">
    <citation type="journal article" date="2004" name="Genome Res.">
        <title>The status, quality, and expansion of the NIH full-length cDNA project: the Mammalian Gene Collection (MGC).</title>
        <authorList>
            <consortium name="The MGC Project Team"/>
        </authorList>
    </citation>
    <scope>NUCLEOTIDE SEQUENCE [LARGE SCALE MRNA] (ISOFORM 1)</scope>
    <source>
        <strain>C57BL/6J</strain>
        <tissue>Eye</tissue>
    </source>
</reference>